<proteinExistence type="evidence at protein level"/>
<evidence type="ECO:0000250" key="1">
    <source>
        <dbReference type="UniProtKB" id="A0A1C9J6A7"/>
    </source>
</evidence>
<evidence type="ECO:0000250" key="2">
    <source>
        <dbReference type="UniProtKB" id="O81192"/>
    </source>
</evidence>
<evidence type="ECO:0000250" key="3">
    <source>
        <dbReference type="UniProtKB" id="Q40577"/>
    </source>
</evidence>
<evidence type="ECO:0000250" key="4">
    <source>
        <dbReference type="UniProtKB" id="Q6JD73"/>
    </source>
</evidence>
<evidence type="ECO:0000255" key="5"/>
<evidence type="ECO:0000269" key="6">
    <source>
    </source>
</evidence>
<evidence type="ECO:0000269" key="7">
    <source>
    </source>
</evidence>
<evidence type="ECO:0000303" key="8">
    <source>
    </source>
</evidence>
<evidence type="ECO:0000305" key="9"/>
<evidence type="ECO:0000305" key="10">
    <source>
    </source>
</evidence>
<evidence type="ECO:0000305" key="11">
    <source>
    </source>
</evidence>
<evidence type="ECO:0000312" key="12">
    <source>
        <dbReference type="EMBL" id="AAX99149.1"/>
    </source>
</evidence>
<evidence type="ECO:0000312" key="13">
    <source>
        <dbReference type="EMBL" id="AQK67958.1"/>
    </source>
</evidence>
<organism>
    <name type="scientific">Zea mays</name>
    <name type="common">Maize</name>
    <dbReference type="NCBI Taxonomy" id="4577"/>
    <lineage>
        <taxon>Eukaryota</taxon>
        <taxon>Viridiplantae</taxon>
        <taxon>Streptophyta</taxon>
        <taxon>Embryophyta</taxon>
        <taxon>Tracheophyta</taxon>
        <taxon>Spermatophyta</taxon>
        <taxon>Magnoliopsida</taxon>
        <taxon>Liliopsida</taxon>
        <taxon>Poales</taxon>
        <taxon>Poaceae</taxon>
        <taxon>PACMAD clade</taxon>
        <taxon>Panicoideae</taxon>
        <taxon>Andropogonodae</taxon>
        <taxon>Andropogoneae</taxon>
        <taxon>Tripsacinae</taxon>
        <taxon>Zea</taxon>
    </lineage>
</organism>
<dbReference type="EC" id="4.2.3.48" evidence="7"/>
<dbReference type="EC" id="4.2.3.144" evidence="7"/>
<dbReference type="EC" id="4.2.3.25" evidence="7"/>
<dbReference type="EMBL" id="AY928081">
    <property type="protein sequence ID" value="AAX99149.1"/>
    <property type="molecule type" value="mRNA"/>
</dbReference>
<dbReference type="EMBL" id="CM000781">
    <property type="protein sequence ID" value="AQK67958.1"/>
    <property type="molecule type" value="Genomic_DNA"/>
</dbReference>
<dbReference type="RefSeq" id="NP_001105854.1">
    <property type="nucleotide sequence ID" value="NM_001112384.1"/>
</dbReference>
<dbReference type="SMR" id="Q29VN2"/>
<dbReference type="FunCoup" id="Q29VN2">
    <property type="interactions" value="1537"/>
</dbReference>
<dbReference type="STRING" id="4577.Q29VN2"/>
<dbReference type="PaxDb" id="4577-GRMZM2G046615_P01"/>
<dbReference type="GeneID" id="732758"/>
<dbReference type="KEGG" id="zma:732758"/>
<dbReference type="MaizeGDB" id="9022637"/>
<dbReference type="eggNOG" id="ENOG502QTGK">
    <property type="taxonomic scope" value="Eukaryota"/>
</dbReference>
<dbReference type="HOGENOM" id="CLU_003125_7_1_1"/>
<dbReference type="InParanoid" id="Q29VN2"/>
<dbReference type="OMA" id="MMTAIQG"/>
<dbReference type="OrthoDB" id="672026at2759"/>
<dbReference type="SABIO-RK" id="Q29VN2"/>
<dbReference type="UniPathway" id="UPA00213"/>
<dbReference type="Proteomes" id="UP000007305">
    <property type="component" value="Unplaced"/>
</dbReference>
<dbReference type="ExpressionAtlas" id="Q29VN2">
    <property type="expression patterns" value="baseline and differential"/>
</dbReference>
<dbReference type="GO" id="GO:0009507">
    <property type="term" value="C:chloroplast"/>
    <property type="evidence" value="ECO:0000314"/>
    <property type="project" value="UniProtKB"/>
</dbReference>
<dbReference type="GO" id="GO:0080013">
    <property type="term" value="F:(E,E)-geranyllinalool synthase activity"/>
    <property type="evidence" value="ECO:0000314"/>
    <property type="project" value="UniProtKB"/>
</dbReference>
<dbReference type="GO" id="GO:0000287">
    <property type="term" value="F:magnesium ion binding"/>
    <property type="evidence" value="ECO:0000250"/>
    <property type="project" value="UniProtKB"/>
</dbReference>
<dbReference type="GO" id="GO:0034007">
    <property type="term" value="F:S-linalool synthase activity"/>
    <property type="evidence" value="ECO:0000314"/>
    <property type="project" value="UniProtKB"/>
</dbReference>
<dbReference type="GO" id="GO:0010334">
    <property type="term" value="F:sesquiterpene synthase activity"/>
    <property type="evidence" value="ECO:0000314"/>
    <property type="project" value="UniProtKB"/>
</dbReference>
<dbReference type="GO" id="GO:0006952">
    <property type="term" value="P:defense response"/>
    <property type="evidence" value="ECO:0007669"/>
    <property type="project" value="UniProtKB-KW"/>
</dbReference>
<dbReference type="GO" id="GO:0016102">
    <property type="term" value="P:diterpenoid biosynthetic process"/>
    <property type="evidence" value="ECO:0000314"/>
    <property type="project" value="UniProtKB"/>
</dbReference>
<dbReference type="GO" id="GO:0043693">
    <property type="term" value="P:monoterpene biosynthetic process"/>
    <property type="evidence" value="ECO:0000314"/>
    <property type="project" value="UniProtKB"/>
</dbReference>
<dbReference type="GO" id="GO:0031347">
    <property type="term" value="P:regulation of defense response"/>
    <property type="evidence" value="ECO:0000270"/>
    <property type="project" value="UniProtKB"/>
</dbReference>
<dbReference type="GO" id="GO:0009611">
    <property type="term" value="P:response to wounding"/>
    <property type="evidence" value="ECO:0000270"/>
    <property type="project" value="UniProtKB"/>
</dbReference>
<dbReference type="GO" id="GO:0051762">
    <property type="term" value="P:sesquiterpene biosynthetic process"/>
    <property type="evidence" value="ECO:0000314"/>
    <property type="project" value="UniProtKB"/>
</dbReference>
<dbReference type="FunFam" id="1.10.600.10:FF:000042">
    <property type="entry name" value="Probable terpene synthase 3, chloroplastic"/>
    <property type="match status" value="1"/>
</dbReference>
<dbReference type="FunFam" id="1.50.10.130:FF:000005">
    <property type="entry name" value="S-(+)-linalool synthase, chloroplastic"/>
    <property type="match status" value="1"/>
</dbReference>
<dbReference type="Gene3D" id="1.10.600.10">
    <property type="entry name" value="Farnesyl Diphosphate Synthase"/>
    <property type="match status" value="1"/>
</dbReference>
<dbReference type="Gene3D" id="1.50.10.130">
    <property type="entry name" value="Terpene synthase, N-terminal domain"/>
    <property type="match status" value="1"/>
</dbReference>
<dbReference type="InterPro" id="IPR008949">
    <property type="entry name" value="Isoprenoid_synthase_dom_sf"/>
</dbReference>
<dbReference type="InterPro" id="IPR034741">
    <property type="entry name" value="Terpene_cyclase-like_1_C"/>
</dbReference>
<dbReference type="InterPro" id="IPR001906">
    <property type="entry name" value="Terpene_synth_N"/>
</dbReference>
<dbReference type="InterPro" id="IPR036965">
    <property type="entry name" value="Terpene_synth_N_sf"/>
</dbReference>
<dbReference type="InterPro" id="IPR050148">
    <property type="entry name" value="Terpene_synthase-like"/>
</dbReference>
<dbReference type="InterPro" id="IPR005630">
    <property type="entry name" value="Terpene_synthase_metal-bd"/>
</dbReference>
<dbReference type="InterPro" id="IPR008930">
    <property type="entry name" value="Terpenoid_cyclase/PrenylTrfase"/>
</dbReference>
<dbReference type="PANTHER" id="PTHR31225">
    <property type="entry name" value="OS04G0344100 PROTEIN-RELATED"/>
    <property type="match status" value="1"/>
</dbReference>
<dbReference type="PANTHER" id="PTHR31225:SF0">
    <property type="entry name" value="S-(+)-LINALOOL SYNTHASE, CHLOROPLASTIC"/>
    <property type="match status" value="1"/>
</dbReference>
<dbReference type="Pfam" id="PF01397">
    <property type="entry name" value="Terpene_synth"/>
    <property type="match status" value="1"/>
</dbReference>
<dbReference type="Pfam" id="PF03936">
    <property type="entry name" value="Terpene_synth_C"/>
    <property type="match status" value="1"/>
</dbReference>
<dbReference type="SFLD" id="SFLDS00005">
    <property type="entry name" value="Isoprenoid_Synthase_Type_I"/>
    <property type="match status" value="1"/>
</dbReference>
<dbReference type="SFLD" id="SFLDG01019">
    <property type="entry name" value="Terpene_Cyclase_Like_1_C_Termi"/>
    <property type="match status" value="1"/>
</dbReference>
<dbReference type="SUPFAM" id="SSF48239">
    <property type="entry name" value="Terpenoid cyclases/Protein prenyltransferases"/>
    <property type="match status" value="1"/>
</dbReference>
<dbReference type="SUPFAM" id="SSF48576">
    <property type="entry name" value="Terpenoid synthases"/>
    <property type="match status" value="1"/>
</dbReference>
<gene>
    <name evidence="8 12" type="primary">TPS2</name>
    <name evidence="13" type="ORF">ZEAMMB73_Zm00001d015053</name>
</gene>
<name>TPS2_MAIZE</name>
<comment type="function">
    <text evidence="7">Involved in sesquiterpene (C15), diterpene (C20) and monoterpene (C10) biosynthesis. Has sesquiterpene synthase activity, converting farnesyl diphosphate to nerolidol, the precursor of the volatile C11-homoterpene (E)-3,8-dimethyl-1,4,7-nonatriene (DMNT). Has diterpene synthase activity, converting geranylgeranyl diphosphate to (E,E)-geranyllinalool, the precursor of the volatile C16-homoterpene (E,E)-4,8,12-trimethyltrideca 1,3,7,11-tetraene (TMTT). Has monoterpene synthase activity, converting geranyl diphosphate into linalool. Forms only the S-isomers of the three tertiary terpene alcohols.</text>
</comment>
<comment type="catalytic activity">
    <reaction evidence="7">
        <text>(2E,6E)-farnesyl diphosphate + H2O = (3S,6E)-nerolidol + diphosphate</text>
        <dbReference type="Rhea" id="RHEA:27530"/>
        <dbReference type="ChEBI" id="CHEBI:15377"/>
        <dbReference type="ChEBI" id="CHEBI:33019"/>
        <dbReference type="ChEBI" id="CHEBI:59958"/>
        <dbReference type="ChEBI" id="CHEBI:175763"/>
        <dbReference type="EC" id="4.2.3.48"/>
    </reaction>
    <physiologicalReaction direction="left-to-right" evidence="7">
        <dbReference type="Rhea" id="RHEA:27531"/>
    </physiologicalReaction>
</comment>
<comment type="catalytic activity">
    <reaction evidence="7">
        <text>(2E,6E,10E)-geranylgeranyl diphosphate + H2O = (6E,10E)-geranyllinalool + diphosphate</text>
        <dbReference type="Rhea" id="RHEA:38155"/>
        <dbReference type="ChEBI" id="CHEBI:15377"/>
        <dbReference type="ChEBI" id="CHEBI:33019"/>
        <dbReference type="ChEBI" id="CHEBI:58756"/>
        <dbReference type="ChEBI" id="CHEBI:74299"/>
        <dbReference type="EC" id="4.2.3.144"/>
    </reaction>
    <physiologicalReaction direction="left-to-right" evidence="7">
        <dbReference type="Rhea" id="RHEA:38156"/>
    </physiologicalReaction>
</comment>
<comment type="catalytic activity">
    <reaction evidence="7">
        <text>(2E)-geranyl diphosphate + H2O = (S)-linalool + diphosphate</text>
        <dbReference type="Rhea" id="RHEA:24116"/>
        <dbReference type="ChEBI" id="CHEBI:98"/>
        <dbReference type="ChEBI" id="CHEBI:15377"/>
        <dbReference type="ChEBI" id="CHEBI:33019"/>
        <dbReference type="ChEBI" id="CHEBI:58057"/>
        <dbReference type="EC" id="4.2.3.25"/>
    </reaction>
    <physiologicalReaction direction="left-to-right" evidence="7">
        <dbReference type="Rhea" id="RHEA:24117"/>
    </physiologicalReaction>
</comment>
<comment type="cofactor">
    <cofactor evidence="2">
        <name>Mg(2+)</name>
        <dbReference type="ChEBI" id="CHEBI:18420"/>
    </cofactor>
    <text evidence="2">Binds 3 Mg(2+) ions per subunit.</text>
</comment>
<comment type="biophysicochemical properties">
    <kinetics>
        <KM evidence="7">18 uM for farnesyl diphosphate (at pH 7.5)</KM>
        <KM evidence="7">25 uM for geranylgeranyl diphosphate (at pH 7.5)</KM>
        <KM evidence="7">16.9 uM for geranyl diphosphate (at pH 7.5)</KM>
    </kinetics>
</comment>
<comment type="pathway">
    <text evidence="10 11">Secondary metabolite biosynthesis; terpenoid biosynthesis.</text>
</comment>
<comment type="subunit">
    <text evidence="4">Monomer.</text>
</comment>
<comment type="subcellular location">
    <subcellularLocation>
        <location evidence="7">Plastid</location>
        <location evidence="7">Chloroplast</location>
    </subcellularLocation>
</comment>
<comment type="induction">
    <text evidence="6 7">By a musk indanone elicitor that mimics herbivory. By caterpillar S.littoralis oral secretions, in combination with wounding (PubMed:27662898). By corn leaf aphid feeding (PubMed:26378100).</text>
</comment>
<comment type="domain">
    <text evidence="1">The Asp-Asp-Xaa-Xaa-Asp/Glu (DDXXD/E) motif is important for the catalytic activity, presumably through binding to Mg(2+).</text>
</comment>
<comment type="similarity">
    <text evidence="5 9">Belongs to the terpene synthase family.</text>
</comment>
<reference key="1">
    <citation type="journal article" date="2016" name="Plant Cell">
        <title>Characterization of biosynthetic pathways for the production of the volatile homoterpenes DMNT and TMTT in Zea mays.</title>
        <authorList>
            <person name="Richter A."/>
            <person name="Schaff C."/>
            <person name="Zhang Z."/>
            <person name="Lipka A.E."/>
            <person name="Tian F."/>
            <person name="Koellner T.G."/>
            <person name="Schnee C."/>
            <person name="Preiss S."/>
            <person name="Irmisch S."/>
            <person name="Jander G."/>
            <person name="Boland W."/>
            <person name="Gershenzon J."/>
            <person name="Buckler E.S."/>
            <person name="Degenhardt J."/>
        </authorList>
    </citation>
    <scope>NUCLEOTIDE SEQUENCE [MRNA]</scope>
    <scope>FUNCTION</scope>
    <scope>CATALYTIC ACTIVITY</scope>
    <scope>BIOPHYSICOCHEMICAL PROPERTIES</scope>
    <scope>SUBCELLULAR LOCATION</scope>
    <scope>INDUCTION</scope>
    <scope>PHYLOGENETIC ANALYSIS</scope>
    <source>
        <strain>cv. B73</strain>
    </source>
</reference>
<reference key="2">
    <citation type="journal article" date="2009" name="Science">
        <title>The B73 maize genome: complexity, diversity, and dynamics.</title>
        <authorList>
            <person name="Schnable P.S."/>
            <person name="Ware D."/>
            <person name="Fulton R.S."/>
            <person name="Stein J.C."/>
            <person name="Wei F."/>
            <person name="Pasternak S."/>
            <person name="Liang C."/>
            <person name="Zhang J."/>
            <person name="Fulton L."/>
            <person name="Graves T.A."/>
            <person name="Minx P."/>
            <person name="Reily A.D."/>
            <person name="Courtney L."/>
            <person name="Kruchowski S.S."/>
            <person name="Tomlinson C."/>
            <person name="Strong C."/>
            <person name="Delehaunty K."/>
            <person name="Fronick C."/>
            <person name="Courtney B."/>
            <person name="Rock S.M."/>
            <person name="Belter E."/>
            <person name="Du F."/>
            <person name="Kim K."/>
            <person name="Abbott R.M."/>
            <person name="Cotton M."/>
            <person name="Levy A."/>
            <person name="Marchetto P."/>
            <person name="Ochoa K."/>
            <person name="Jackson S.M."/>
            <person name="Gillam B."/>
            <person name="Chen W."/>
            <person name="Yan L."/>
            <person name="Higginbotham J."/>
            <person name="Cardenas M."/>
            <person name="Waligorski J."/>
            <person name="Applebaum E."/>
            <person name="Phelps L."/>
            <person name="Falcone J."/>
            <person name="Kanchi K."/>
            <person name="Thane T."/>
            <person name="Scimone A."/>
            <person name="Thane N."/>
            <person name="Henke J."/>
            <person name="Wang T."/>
            <person name="Ruppert J."/>
            <person name="Shah N."/>
            <person name="Rotter K."/>
            <person name="Hodges J."/>
            <person name="Ingenthron E."/>
            <person name="Cordes M."/>
            <person name="Kohlberg S."/>
            <person name="Sgro J."/>
            <person name="Delgado B."/>
            <person name="Mead K."/>
            <person name="Chinwalla A."/>
            <person name="Leonard S."/>
            <person name="Crouse K."/>
            <person name="Collura K."/>
            <person name="Kudrna D."/>
            <person name="Currie J."/>
            <person name="He R."/>
            <person name="Angelova A."/>
            <person name="Rajasekar S."/>
            <person name="Mueller T."/>
            <person name="Lomeli R."/>
            <person name="Scara G."/>
            <person name="Ko A."/>
            <person name="Delaney K."/>
            <person name="Wissotski M."/>
            <person name="Lopez G."/>
            <person name="Campos D."/>
            <person name="Braidotti M."/>
            <person name="Ashley E."/>
            <person name="Golser W."/>
            <person name="Kim H."/>
            <person name="Lee S."/>
            <person name="Lin J."/>
            <person name="Dujmic Z."/>
            <person name="Kim W."/>
            <person name="Talag J."/>
            <person name="Zuccolo A."/>
            <person name="Fan C."/>
            <person name="Sebastian A."/>
            <person name="Kramer M."/>
            <person name="Spiegel L."/>
            <person name="Nascimento L."/>
            <person name="Zutavern T."/>
            <person name="Miller B."/>
            <person name="Ambroise C."/>
            <person name="Muller S."/>
            <person name="Spooner W."/>
            <person name="Narechania A."/>
            <person name="Ren L."/>
            <person name="Wei S."/>
            <person name="Kumari S."/>
            <person name="Faga B."/>
            <person name="Levy M.J."/>
            <person name="McMahan L."/>
            <person name="Van Buren P."/>
            <person name="Vaughn M.W."/>
            <person name="Ying K."/>
            <person name="Yeh C.-T."/>
            <person name="Emrich S.J."/>
            <person name="Jia Y."/>
            <person name="Kalyanaraman A."/>
            <person name="Hsia A.-P."/>
            <person name="Barbazuk W.B."/>
            <person name="Baucom R.S."/>
            <person name="Brutnell T.P."/>
            <person name="Carpita N.C."/>
            <person name="Chaparro C."/>
            <person name="Chia J.-M."/>
            <person name="Deragon J.-M."/>
            <person name="Estill J.C."/>
            <person name="Fu Y."/>
            <person name="Jeddeloh J.A."/>
            <person name="Han Y."/>
            <person name="Lee H."/>
            <person name="Li P."/>
            <person name="Lisch D.R."/>
            <person name="Liu S."/>
            <person name="Liu Z."/>
            <person name="Nagel D.H."/>
            <person name="McCann M.C."/>
            <person name="SanMiguel P."/>
            <person name="Myers A.M."/>
            <person name="Nettleton D."/>
            <person name="Nguyen J."/>
            <person name="Penning B.W."/>
            <person name="Ponnala L."/>
            <person name="Schneider K.L."/>
            <person name="Schwartz D.C."/>
            <person name="Sharma A."/>
            <person name="Soderlund C."/>
            <person name="Springer N.M."/>
            <person name="Sun Q."/>
            <person name="Wang H."/>
            <person name="Waterman M."/>
            <person name="Westerman R."/>
            <person name="Wolfgruber T.K."/>
            <person name="Yang L."/>
            <person name="Yu Y."/>
            <person name="Zhang L."/>
            <person name="Zhou S."/>
            <person name="Zhu Q."/>
            <person name="Bennetzen J.L."/>
            <person name="Dawe R.K."/>
            <person name="Jiang J."/>
            <person name="Jiang N."/>
            <person name="Presting G.G."/>
            <person name="Wessler S.R."/>
            <person name="Aluru S."/>
            <person name="Martienssen R.A."/>
            <person name="Clifton S.W."/>
            <person name="McCombie W.R."/>
            <person name="Wing R.A."/>
            <person name="Wilson R.K."/>
        </authorList>
    </citation>
    <scope>NUCLEOTIDE SEQUENCE [LARGE SCALE GENOMIC DNA]</scope>
    <source>
        <strain>cv. B73</strain>
    </source>
</reference>
<reference key="3">
    <citation type="journal article" date="2015" name="Plant Physiol.">
        <title>Dynamic maize responses to aphid feeding are revealed by a time series of transcriptomic and metabolomic assays.</title>
        <authorList>
            <person name="Tzin V."/>
            <person name="Fernandez-Pozo N."/>
            <person name="Richter A."/>
            <person name="Schmelz E.A."/>
            <person name="Schoettner M."/>
            <person name="Schaefer M."/>
            <person name="Ahern K.R."/>
            <person name="Meihls L.N."/>
            <person name="Kaur H."/>
            <person name="Huffaker A."/>
            <person name="Mori N."/>
            <person name="Degenhardt J."/>
            <person name="Mueller L.A."/>
            <person name="Jander G."/>
        </authorList>
    </citation>
    <scope>INDUCTION</scope>
</reference>
<reference key="4">
    <citation type="journal article" date="2019" name="Planta">
        <title>Biosynthesis and function of terpenoid defense compounds in maize (Zea mays).</title>
        <authorList>
            <person name="Block A.K."/>
            <person name="Vaughan M.M."/>
            <person name="Schmelz E.A."/>
            <person name="Christensen S.A."/>
        </authorList>
    </citation>
    <scope>REVIEW</scope>
</reference>
<accession>Q29VN2</accession>
<sequence>MYSLPGATMSAAPASIISSSSFVEPLLLAAASPAAAAAAANSHHQVRQRGHLVRTLAASSSSNTLLRSDFDLQEGLTTDVKRMLRQRQKKSGGGREMLVTIDNLKRLCIDHYFEEEIEGAMATGACTRLLHSDDLFDATLAFRLLREAGHDVSAKDDVLRRFIDGASGDFKLSLSNDVRGLLSLHDMSHLDVGGEAALLHRAKEFSSRHLASAVRYLDDPSLAEYVRQSLDHPYHLSLTQYKARHHLRYLQSLPSRDAAVERLAVAEFQLNKSLHQGEMREIKRWWMDLGLAEEIPVVRDQVMKWYMWSMAALQGSSFSRYRVEITKIISLVYVVDDIFDLVGTLEELSAFTEAVKMWDTVAADSLPSCMRSCYKALHTVTNEIAEIAQKEHGSNHVNRLRKAWAVLFDGFMVEARWLATDQVPTAEDYLRNGVITSGVPLTFMHIFSMLGYDDPSTEEEEEAIIDHMPSIISCPAKILRLWDDMGSAEDEAQEGFDGSYRDFYLMENPSRSPGEAEAHMRGLIAREWEVLNRECFCRRTFPSNLVQVCLNTARMVSVMYSYNKEQRLPVLEDYAAMMLVL</sequence>
<feature type="transit peptide" description="Chloroplast" evidence="5">
    <location>
        <begin position="1"/>
        <end position="34"/>
    </location>
</feature>
<feature type="chain" id="PRO_0000440867" description="Terpene synthase 2, chloroplastic" evidence="5">
    <location>
        <begin position="35"/>
        <end position="581"/>
    </location>
</feature>
<feature type="short sequence motif" description="DDXXD motif" evidence="1">
    <location>
        <begin position="336"/>
        <end position="340"/>
    </location>
</feature>
<feature type="binding site" evidence="2">
    <location>
        <position position="299"/>
    </location>
    <ligand>
        <name>substrate</name>
    </ligand>
</feature>
<feature type="binding site" evidence="2">
    <location>
        <position position="336"/>
    </location>
    <ligand>
        <name>Mg(2+)</name>
        <dbReference type="ChEBI" id="CHEBI:18420"/>
        <label>1</label>
    </ligand>
</feature>
<feature type="binding site" evidence="2">
    <location>
        <position position="336"/>
    </location>
    <ligand>
        <name>Mg(2+)</name>
        <dbReference type="ChEBI" id="CHEBI:18420"/>
        <label>2</label>
    </ligand>
</feature>
<feature type="binding site" evidence="1">
    <location>
        <position position="336"/>
    </location>
    <ligand>
        <name>substrate</name>
    </ligand>
</feature>
<feature type="binding site" evidence="2">
    <location>
        <position position="340"/>
    </location>
    <ligand>
        <name>Mg(2+)</name>
        <dbReference type="ChEBI" id="CHEBI:18420"/>
        <label>1</label>
    </ligand>
</feature>
<feature type="binding site" evidence="2">
    <location>
        <position position="340"/>
    </location>
    <ligand>
        <name>Mg(2+)</name>
        <dbReference type="ChEBI" id="CHEBI:18420"/>
        <label>2</label>
    </ligand>
</feature>
<feature type="binding site" evidence="1">
    <location>
        <position position="340"/>
    </location>
    <ligand>
        <name>substrate</name>
    </ligand>
</feature>
<feature type="binding site" evidence="2">
    <location>
        <position position="480"/>
    </location>
    <ligand>
        <name>substrate</name>
    </ligand>
</feature>
<feature type="binding site" evidence="2">
    <location>
        <position position="483"/>
    </location>
    <ligand>
        <name>Mg(2+)</name>
        <dbReference type="ChEBI" id="CHEBI:18420"/>
        <label>3</label>
    </ligand>
</feature>
<feature type="binding site" evidence="3">
    <location>
        <position position="487"/>
    </location>
    <ligand>
        <name>Mg(2+)</name>
        <dbReference type="ChEBI" id="CHEBI:18420"/>
        <label>3</label>
    </ligand>
</feature>
<feature type="binding site" evidence="2">
    <location>
        <position position="491"/>
    </location>
    <ligand>
        <name>Mg(2+)</name>
        <dbReference type="ChEBI" id="CHEBI:18420"/>
        <label>3</label>
    </ligand>
</feature>
<protein>
    <recommendedName>
        <fullName evidence="8 12">Terpene synthase 2, chloroplastic</fullName>
    </recommendedName>
    <alternativeName>
        <fullName evidence="9">(3S,6E)-nerolidol synthase</fullName>
        <ecNumber evidence="7">4.2.3.48</ecNumber>
    </alternativeName>
    <alternativeName>
        <fullName evidence="9">(E,E)-geranyllinalool synthase</fullName>
        <ecNumber evidence="7">4.2.3.144</ecNumber>
    </alternativeName>
    <alternativeName>
        <fullName evidence="9">S-(+)-linalool synthase</fullName>
        <ecNumber evidence="7">4.2.3.25</ecNumber>
    </alternativeName>
</protein>
<keyword id="KW-0150">Chloroplast</keyword>
<keyword id="KW-0456">Lyase</keyword>
<keyword id="KW-0460">Magnesium</keyword>
<keyword id="KW-0464">Manganese</keyword>
<keyword id="KW-0479">Metal-binding</keyword>
<keyword id="KW-0611">Plant defense</keyword>
<keyword id="KW-0934">Plastid</keyword>
<keyword id="KW-1185">Reference proteome</keyword>
<keyword id="KW-0809">Transit peptide</keyword>